<evidence type="ECO:0000255" key="1">
    <source>
        <dbReference type="HAMAP-Rule" id="MF_00375"/>
    </source>
</evidence>
<keyword id="KW-0963">Cytoplasm</keyword>
<keyword id="KW-0413">Isomerase</keyword>
<keyword id="KW-0627">Porphyrin biosynthesis</keyword>
<keyword id="KW-0663">Pyridoxal phosphate</keyword>
<protein>
    <recommendedName>
        <fullName evidence="1">Glutamate-1-semialdehyde 2,1-aminomutase</fullName>
        <shortName evidence="1">GSA</shortName>
        <ecNumber evidence="1">5.4.3.8</ecNumber>
    </recommendedName>
    <alternativeName>
        <fullName evidence="1">Glutamate-1-semialdehyde aminotransferase</fullName>
        <shortName evidence="1">GSA-AT</shortName>
    </alternativeName>
</protein>
<comment type="catalytic activity">
    <reaction evidence="1">
        <text>(S)-4-amino-5-oxopentanoate = 5-aminolevulinate</text>
        <dbReference type="Rhea" id="RHEA:14265"/>
        <dbReference type="ChEBI" id="CHEBI:57501"/>
        <dbReference type="ChEBI" id="CHEBI:356416"/>
        <dbReference type="EC" id="5.4.3.8"/>
    </reaction>
</comment>
<comment type="cofactor">
    <cofactor evidence="1">
        <name>pyridoxal 5'-phosphate</name>
        <dbReference type="ChEBI" id="CHEBI:597326"/>
    </cofactor>
</comment>
<comment type="pathway">
    <text evidence="1">Porphyrin-containing compound metabolism; protoporphyrin-IX biosynthesis; 5-aminolevulinate from L-glutamyl-tRNA(Glu): step 2/2.</text>
</comment>
<comment type="subcellular location">
    <subcellularLocation>
        <location evidence="1">Cytoplasm</location>
    </subcellularLocation>
</comment>
<comment type="similarity">
    <text evidence="1">Belongs to the class-III pyridoxal-phosphate-dependent aminotransferase family. HemL subfamily.</text>
</comment>
<name>GSA_METM5</name>
<dbReference type="EC" id="5.4.3.8" evidence="1"/>
<dbReference type="EMBL" id="CP000609">
    <property type="protein sequence ID" value="ABO35765.1"/>
    <property type="molecule type" value="Genomic_DNA"/>
</dbReference>
<dbReference type="RefSeq" id="WP_011869215.1">
    <property type="nucleotide sequence ID" value="NC_009135.1"/>
</dbReference>
<dbReference type="SMR" id="A4FZY1"/>
<dbReference type="STRING" id="402880.MmarC5_1468"/>
<dbReference type="GeneID" id="4927629"/>
<dbReference type="KEGG" id="mmq:MmarC5_1468"/>
<dbReference type="eggNOG" id="arCOG00918">
    <property type="taxonomic scope" value="Archaea"/>
</dbReference>
<dbReference type="HOGENOM" id="CLU_016922_1_5_2"/>
<dbReference type="OrthoDB" id="6524at2157"/>
<dbReference type="UniPathway" id="UPA00251">
    <property type="reaction ID" value="UER00317"/>
</dbReference>
<dbReference type="Proteomes" id="UP000000253">
    <property type="component" value="Chromosome"/>
</dbReference>
<dbReference type="GO" id="GO:0005737">
    <property type="term" value="C:cytoplasm"/>
    <property type="evidence" value="ECO:0007669"/>
    <property type="project" value="UniProtKB-SubCell"/>
</dbReference>
<dbReference type="GO" id="GO:0042286">
    <property type="term" value="F:glutamate-1-semialdehyde 2,1-aminomutase activity"/>
    <property type="evidence" value="ECO:0007669"/>
    <property type="project" value="UniProtKB-UniRule"/>
</dbReference>
<dbReference type="GO" id="GO:0030170">
    <property type="term" value="F:pyridoxal phosphate binding"/>
    <property type="evidence" value="ECO:0007669"/>
    <property type="project" value="InterPro"/>
</dbReference>
<dbReference type="GO" id="GO:0008483">
    <property type="term" value="F:transaminase activity"/>
    <property type="evidence" value="ECO:0007669"/>
    <property type="project" value="InterPro"/>
</dbReference>
<dbReference type="GO" id="GO:0006782">
    <property type="term" value="P:protoporphyrinogen IX biosynthetic process"/>
    <property type="evidence" value="ECO:0007669"/>
    <property type="project" value="UniProtKB-UniRule"/>
</dbReference>
<dbReference type="CDD" id="cd00610">
    <property type="entry name" value="OAT_like"/>
    <property type="match status" value="1"/>
</dbReference>
<dbReference type="FunFam" id="3.40.640.10:FF:000021">
    <property type="entry name" value="Glutamate-1-semialdehyde 2,1-aminomutase"/>
    <property type="match status" value="1"/>
</dbReference>
<dbReference type="Gene3D" id="3.90.1150.10">
    <property type="entry name" value="Aspartate Aminotransferase, domain 1"/>
    <property type="match status" value="1"/>
</dbReference>
<dbReference type="Gene3D" id="3.40.640.10">
    <property type="entry name" value="Type I PLP-dependent aspartate aminotransferase-like (Major domain)"/>
    <property type="match status" value="1"/>
</dbReference>
<dbReference type="HAMAP" id="MF_00375">
    <property type="entry name" value="HemL_aminotrans_3"/>
    <property type="match status" value="1"/>
</dbReference>
<dbReference type="InterPro" id="IPR004639">
    <property type="entry name" value="4pyrrol_synth_GluAld_NH2Trfase"/>
</dbReference>
<dbReference type="InterPro" id="IPR005814">
    <property type="entry name" value="Aminotrans_3"/>
</dbReference>
<dbReference type="InterPro" id="IPR049704">
    <property type="entry name" value="Aminotrans_3_PPA_site"/>
</dbReference>
<dbReference type="InterPro" id="IPR015424">
    <property type="entry name" value="PyrdxlP-dep_Trfase"/>
</dbReference>
<dbReference type="InterPro" id="IPR015421">
    <property type="entry name" value="PyrdxlP-dep_Trfase_major"/>
</dbReference>
<dbReference type="InterPro" id="IPR015422">
    <property type="entry name" value="PyrdxlP-dep_Trfase_small"/>
</dbReference>
<dbReference type="NCBIfam" id="TIGR00713">
    <property type="entry name" value="hemL"/>
    <property type="match status" value="1"/>
</dbReference>
<dbReference type="NCBIfam" id="NF000818">
    <property type="entry name" value="PRK00062.1"/>
    <property type="match status" value="1"/>
</dbReference>
<dbReference type="PANTHER" id="PTHR43713">
    <property type="entry name" value="GLUTAMATE-1-SEMIALDEHYDE 2,1-AMINOMUTASE"/>
    <property type="match status" value="1"/>
</dbReference>
<dbReference type="PANTHER" id="PTHR43713:SF3">
    <property type="entry name" value="GLUTAMATE-1-SEMIALDEHYDE 2,1-AMINOMUTASE 1, CHLOROPLASTIC-RELATED"/>
    <property type="match status" value="1"/>
</dbReference>
<dbReference type="Pfam" id="PF00202">
    <property type="entry name" value="Aminotran_3"/>
    <property type="match status" value="1"/>
</dbReference>
<dbReference type="SUPFAM" id="SSF53383">
    <property type="entry name" value="PLP-dependent transferases"/>
    <property type="match status" value="1"/>
</dbReference>
<dbReference type="PROSITE" id="PS00600">
    <property type="entry name" value="AA_TRANSFER_CLASS_3"/>
    <property type="match status" value="1"/>
</dbReference>
<proteinExistence type="inferred from homology"/>
<organism>
    <name type="scientific">Methanococcus maripaludis (strain C5 / ATCC BAA-1333)</name>
    <dbReference type="NCBI Taxonomy" id="402880"/>
    <lineage>
        <taxon>Archaea</taxon>
        <taxon>Methanobacteriati</taxon>
        <taxon>Methanobacteriota</taxon>
        <taxon>Methanomada group</taxon>
        <taxon>Methanococci</taxon>
        <taxon>Methanococcales</taxon>
        <taxon>Methanococcaceae</taxon>
        <taxon>Methanococcus</taxon>
    </lineage>
</organism>
<reference key="1">
    <citation type="submission" date="2007-03" db="EMBL/GenBank/DDBJ databases">
        <title>Complete sequence of chromosome of Methanococcus maripaludis C5.</title>
        <authorList>
            <consortium name="US DOE Joint Genome Institute"/>
            <person name="Copeland A."/>
            <person name="Lucas S."/>
            <person name="Lapidus A."/>
            <person name="Barry K."/>
            <person name="Glavina del Rio T."/>
            <person name="Dalin E."/>
            <person name="Tice H."/>
            <person name="Pitluck S."/>
            <person name="Chertkov O."/>
            <person name="Brettin T."/>
            <person name="Bruce D."/>
            <person name="Han C."/>
            <person name="Detter J.C."/>
            <person name="Schmutz J."/>
            <person name="Larimer F."/>
            <person name="Land M."/>
            <person name="Hauser L."/>
            <person name="Kyrpides N."/>
            <person name="Mikhailova N."/>
            <person name="Sieprawska-Lupa M."/>
            <person name="Whitman W.B."/>
            <person name="Richardson P."/>
        </authorList>
    </citation>
    <scope>NUCLEOTIDE SEQUENCE [LARGE SCALE GENOMIC DNA]</scope>
    <source>
        <strain>C5 / ATCC BAA-1333</strain>
    </source>
</reference>
<sequence length="427" mass="47425">MELNLKMDRSKELFEESKKYLVGGVNSPVRSFKPFPFFVKSAKDCFLYDEDGNEFIDYCLAYGPMVLGHANENILNAVKSQMDLGTAYGVPSEKEITLAKEVINRIPCAEMVRFVNSGTEATMGAIRLARGVTGRDKIIKFEGAFHGAHDYVLVKTGSGALTHGAPNSPGIPEDTTKNTLLIPFNDEDAVRKVISENKDEIACIILEPVMGNVGCILPQDGYLQFLREITEENGILLIFDEVITGFRLSKGGAQEYFGIKSDLATIGKILGGGFPIGAITGKKEYMEQFSPSGQIYQAGTFNGNPVSVTAGIETLKNLDDKFYKETTKKADILSNFLRETAEKYNVSTKVYNVASIFQIYFNEKEVVTYEDAKSSDTEKFMRYFYTLLENGVFVAPSQFECCFTSIKHNDEVLEKTMNAIDIAMKKL</sequence>
<accession>A4FZY1</accession>
<feature type="chain" id="PRO_0000382400" description="Glutamate-1-semialdehyde 2,1-aminomutase">
    <location>
        <begin position="1"/>
        <end position="427"/>
    </location>
</feature>
<feature type="modified residue" description="N6-(pyridoxal phosphate)lysine" evidence="1">
    <location>
        <position position="268"/>
    </location>
</feature>
<gene>
    <name evidence="1" type="primary">hemL</name>
    <name type="ordered locus">MmarC5_1468</name>
</gene>